<sequence>MTQMTSSDVPGMGRRQFMNLLTFGSVTGVALGSLYPVVKYFIPPRASGSGGGTSAKDELGNSVTASGWLANHSDGDRSLVQGLKGDPTYLIVEGDDAIGSYGINAICTHLGCVVPWNSGVNKFVCPCHGSQYNSTGKVVRGPAPLSLALANIAVENDNVFVSQWTETDFRTGEKPWWT</sequence>
<evidence type="ECO:0000255" key="1">
    <source>
        <dbReference type="HAMAP-Rule" id="MF_01335"/>
    </source>
</evidence>
<keyword id="KW-0001">2Fe-2S</keyword>
<keyword id="KW-1015">Disulfide bond</keyword>
<keyword id="KW-0249">Electron transport</keyword>
<keyword id="KW-0408">Iron</keyword>
<keyword id="KW-0411">Iron-sulfur</keyword>
<keyword id="KW-0472">Membrane</keyword>
<keyword id="KW-0479">Metal-binding</keyword>
<keyword id="KW-0793">Thylakoid</keyword>
<keyword id="KW-1278">Translocase</keyword>
<keyword id="KW-0812">Transmembrane</keyword>
<keyword id="KW-1133">Transmembrane helix</keyword>
<keyword id="KW-0813">Transport</keyword>
<dbReference type="EC" id="7.1.1.6" evidence="1"/>
<dbReference type="EMBL" id="CP000554">
    <property type="protein sequence ID" value="ABM77416.1"/>
    <property type="molecule type" value="Genomic_DNA"/>
</dbReference>
<dbReference type="RefSeq" id="WP_011825335.1">
    <property type="nucleotide sequence ID" value="NC_008820.1"/>
</dbReference>
<dbReference type="SMR" id="A2C7F6"/>
<dbReference type="STRING" id="59922.P9303_06651"/>
<dbReference type="KEGG" id="pmf:P9303_06651"/>
<dbReference type="HOGENOM" id="CLU_055690_8_0_3"/>
<dbReference type="BioCyc" id="PMAR59922:G1G80-612-MONOMER"/>
<dbReference type="Proteomes" id="UP000002274">
    <property type="component" value="Chromosome"/>
</dbReference>
<dbReference type="GO" id="GO:0031676">
    <property type="term" value="C:plasma membrane-derived thylakoid membrane"/>
    <property type="evidence" value="ECO:0007669"/>
    <property type="project" value="UniProtKB-SubCell"/>
</dbReference>
<dbReference type="GO" id="GO:0051537">
    <property type="term" value="F:2 iron, 2 sulfur cluster binding"/>
    <property type="evidence" value="ECO:0007669"/>
    <property type="project" value="UniProtKB-KW"/>
</dbReference>
<dbReference type="GO" id="GO:0045158">
    <property type="term" value="F:electron transporter, transferring electrons within cytochrome b6/f complex of photosystem II activity"/>
    <property type="evidence" value="ECO:0007669"/>
    <property type="project" value="UniProtKB-UniRule"/>
</dbReference>
<dbReference type="GO" id="GO:0046872">
    <property type="term" value="F:metal ion binding"/>
    <property type="evidence" value="ECO:0007669"/>
    <property type="project" value="UniProtKB-KW"/>
</dbReference>
<dbReference type="GO" id="GO:0004497">
    <property type="term" value="F:monooxygenase activity"/>
    <property type="evidence" value="ECO:0007669"/>
    <property type="project" value="UniProtKB-ARBA"/>
</dbReference>
<dbReference type="GO" id="GO:0016705">
    <property type="term" value="F:oxidoreductase activity, acting on paired donors, with incorporation or reduction of molecular oxygen"/>
    <property type="evidence" value="ECO:0007669"/>
    <property type="project" value="UniProtKB-ARBA"/>
</dbReference>
<dbReference type="GO" id="GO:0009496">
    <property type="term" value="F:plastoquinol--plastocyanin reductase activity"/>
    <property type="evidence" value="ECO:0007669"/>
    <property type="project" value="UniProtKB-UniRule"/>
</dbReference>
<dbReference type="GO" id="GO:0015979">
    <property type="term" value="P:photosynthesis"/>
    <property type="evidence" value="ECO:0007669"/>
    <property type="project" value="UniProtKB-UniRule"/>
</dbReference>
<dbReference type="CDD" id="cd03471">
    <property type="entry name" value="Rieske_cytochrome_b6f"/>
    <property type="match status" value="1"/>
</dbReference>
<dbReference type="FunFam" id="2.102.10.10:FF:000007">
    <property type="entry name" value="Cytochrome b6-f complex iron-sulfur subunit"/>
    <property type="match status" value="1"/>
</dbReference>
<dbReference type="Gene3D" id="2.102.10.10">
    <property type="entry name" value="Rieske [2Fe-2S] iron-sulphur domain"/>
    <property type="match status" value="1"/>
</dbReference>
<dbReference type="Gene3D" id="1.20.5.700">
    <property type="entry name" value="Single helix bin"/>
    <property type="match status" value="1"/>
</dbReference>
<dbReference type="HAMAP" id="MF_01335">
    <property type="entry name" value="Cytb6_f_Rieske"/>
    <property type="match status" value="1"/>
</dbReference>
<dbReference type="InterPro" id="IPR023960">
    <property type="entry name" value="Cyt_b6_f_Rieske"/>
</dbReference>
<dbReference type="InterPro" id="IPR017941">
    <property type="entry name" value="Rieske_2Fe-2S"/>
</dbReference>
<dbReference type="InterPro" id="IPR036922">
    <property type="entry name" value="Rieske_2Fe-2S_sf"/>
</dbReference>
<dbReference type="InterPro" id="IPR014349">
    <property type="entry name" value="Rieske_Fe-S_prot"/>
</dbReference>
<dbReference type="InterPro" id="IPR005805">
    <property type="entry name" value="Rieske_Fe-S_prot_C"/>
</dbReference>
<dbReference type="NCBIfam" id="NF045928">
    <property type="entry name" value="Cytb6fFeSPetC"/>
    <property type="match status" value="1"/>
</dbReference>
<dbReference type="NCBIfam" id="NF010001">
    <property type="entry name" value="PRK13474.1"/>
    <property type="match status" value="1"/>
</dbReference>
<dbReference type="PANTHER" id="PTHR10134">
    <property type="entry name" value="CYTOCHROME B-C1 COMPLEX SUBUNIT RIESKE, MITOCHONDRIAL"/>
    <property type="match status" value="1"/>
</dbReference>
<dbReference type="Pfam" id="PF00355">
    <property type="entry name" value="Rieske"/>
    <property type="match status" value="1"/>
</dbReference>
<dbReference type="Pfam" id="PF25471">
    <property type="entry name" value="TM_PetC"/>
    <property type="match status" value="1"/>
</dbReference>
<dbReference type="PRINTS" id="PR00162">
    <property type="entry name" value="RIESKE"/>
</dbReference>
<dbReference type="SUPFAM" id="SSF50022">
    <property type="entry name" value="ISP domain"/>
    <property type="match status" value="1"/>
</dbReference>
<dbReference type="PROSITE" id="PS51296">
    <property type="entry name" value="RIESKE"/>
    <property type="match status" value="1"/>
</dbReference>
<gene>
    <name evidence="1" type="primary">petC</name>
    <name type="ordered locus">P9303_06651</name>
</gene>
<feature type="chain" id="PRO_0000298457" description="Cytochrome b6-f complex iron-sulfur subunit">
    <location>
        <begin position="1"/>
        <end position="178"/>
    </location>
</feature>
<feature type="transmembrane region" description="Helical" evidence="1">
    <location>
        <begin position="20"/>
        <end position="42"/>
    </location>
</feature>
<feature type="domain" description="Rieske" evidence="1">
    <location>
        <begin position="68"/>
        <end position="161"/>
    </location>
</feature>
<feature type="binding site" evidence="1">
    <location>
        <position position="107"/>
    </location>
    <ligand>
        <name>[2Fe-2S] cluster</name>
        <dbReference type="ChEBI" id="CHEBI:190135"/>
    </ligand>
</feature>
<feature type="binding site" evidence="1">
    <location>
        <position position="109"/>
    </location>
    <ligand>
        <name>[2Fe-2S] cluster</name>
        <dbReference type="ChEBI" id="CHEBI:190135"/>
    </ligand>
</feature>
<feature type="binding site" evidence="1">
    <location>
        <position position="125"/>
    </location>
    <ligand>
        <name>[2Fe-2S] cluster</name>
        <dbReference type="ChEBI" id="CHEBI:190135"/>
    </ligand>
</feature>
<feature type="binding site" evidence="1">
    <location>
        <position position="128"/>
    </location>
    <ligand>
        <name>[2Fe-2S] cluster</name>
        <dbReference type="ChEBI" id="CHEBI:190135"/>
    </ligand>
</feature>
<feature type="disulfide bond" evidence="1">
    <location>
        <begin position="112"/>
        <end position="127"/>
    </location>
</feature>
<name>UCRI_PROM3</name>
<protein>
    <recommendedName>
        <fullName evidence="1">Cytochrome b6-f complex iron-sulfur subunit</fullName>
        <ecNumber evidence="1">7.1.1.6</ecNumber>
    </recommendedName>
    <alternativeName>
        <fullName evidence="1">Plastohydroquinone:plastocyanin oxidoreductase iron-sulfur protein</fullName>
        <shortName evidence="1">ISP</shortName>
        <shortName evidence="1">RISP</shortName>
    </alternativeName>
    <alternativeName>
        <fullName evidence="1">Rieske iron-sulfur protein</fullName>
    </alternativeName>
</protein>
<proteinExistence type="inferred from homology"/>
<reference key="1">
    <citation type="journal article" date="2007" name="PLoS Genet.">
        <title>Patterns and implications of gene gain and loss in the evolution of Prochlorococcus.</title>
        <authorList>
            <person name="Kettler G.C."/>
            <person name="Martiny A.C."/>
            <person name="Huang K."/>
            <person name="Zucker J."/>
            <person name="Coleman M.L."/>
            <person name="Rodrigue S."/>
            <person name="Chen F."/>
            <person name="Lapidus A."/>
            <person name="Ferriera S."/>
            <person name="Johnson J."/>
            <person name="Steglich C."/>
            <person name="Church G.M."/>
            <person name="Richardson P."/>
            <person name="Chisholm S.W."/>
        </authorList>
    </citation>
    <scope>NUCLEOTIDE SEQUENCE [LARGE SCALE GENOMIC DNA]</scope>
    <source>
        <strain>MIT 9303</strain>
    </source>
</reference>
<accession>A2C7F6</accession>
<organism>
    <name type="scientific">Prochlorococcus marinus (strain MIT 9303)</name>
    <dbReference type="NCBI Taxonomy" id="59922"/>
    <lineage>
        <taxon>Bacteria</taxon>
        <taxon>Bacillati</taxon>
        <taxon>Cyanobacteriota</taxon>
        <taxon>Cyanophyceae</taxon>
        <taxon>Synechococcales</taxon>
        <taxon>Prochlorococcaceae</taxon>
        <taxon>Prochlorococcus</taxon>
    </lineage>
</organism>
<comment type="function">
    <text evidence="1">Component of the cytochrome b6-f complex, which mediates electron transfer between photosystem II (PSII) and photosystem I (PSI), cyclic electron flow around PSI, and state transitions.</text>
</comment>
<comment type="catalytic activity">
    <reaction evidence="1">
        <text>2 oxidized [plastocyanin] + a plastoquinol + 2 H(+)(in) = 2 reduced [plastocyanin] + a plastoquinone + 4 H(+)(out)</text>
        <dbReference type="Rhea" id="RHEA:22148"/>
        <dbReference type="Rhea" id="RHEA-COMP:9561"/>
        <dbReference type="Rhea" id="RHEA-COMP:9562"/>
        <dbReference type="Rhea" id="RHEA-COMP:10039"/>
        <dbReference type="Rhea" id="RHEA-COMP:10040"/>
        <dbReference type="ChEBI" id="CHEBI:15378"/>
        <dbReference type="ChEBI" id="CHEBI:17757"/>
        <dbReference type="ChEBI" id="CHEBI:29036"/>
        <dbReference type="ChEBI" id="CHEBI:49552"/>
        <dbReference type="ChEBI" id="CHEBI:62192"/>
        <dbReference type="EC" id="7.1.1.6"/>
    </reaction>
</comment>
<comment type="cofactor">
    <cofactor evidence="1">
        <name>[2Fe-2S] cluster</name>
        <dbReference type="ChEBI" id="CHEBI:190135"/>
    </cofactor>
    <text evidence="1">Binds 1 [2Fe-2S] cluster per subunit.</text>
</comment>
<comment type="subunit">
    <text evidence="1">The 4 large subunits of the cytochrome b6-f complex are cytochrome b6, subunit IV (17 kDa polypeptide, PetD), cytochrome f and the Rieske protein, while the 4 small subunits are PetG, PetL, PetM and PetN. The complex functions as a dimer.</text>
</comment>
<comment type="subcellular location">
    <subcellularLocation>
        <location evidence="1">Cellular thylakoid membrane</location>
        <topology evidence="1">Single-pass membrane protein</topology>
    </subcellularLocation>
    <text evidence="1">The transmembrane helix obliquely spans the membrane in one monomer, and its extrinsic C-terminal domain is part of the other monomer.</text>
</comment>
<comment type="miscellaneous">
    <text>The Rieske iron-sulfur protein is a high potential 2Fe-2S protein.</text>
</comment>
<comment type="similarity">
    <text evidence="1">Belongs to the Rieske iron-sulfur protein family.</text>
</comment>